<organism>
    <name type="scientific">Homo sapiens</name>
    <name type="common">Human</name>
    <dbReference type="NCBI Taxonomy" id="9606"/>
    <lineage>
        <taxon>Eukaryota</taxon>
        <taxon>Metazoa</taxon>
        <taxon>Chordata</taxon>
        <taxon>Craniata</taxon>
        <taxon>Vertebrata</taxon>
        <taxon>Euteleostomi</taxon>
        <taxon>Mammalia</taxon>
        <taxon>Eutheria</taxon>
        <taxon>Euarchontoglires</taxon>
        <taxon>Primates</taxon>
        <taxon>Haplorrhini</taxon>
        <taxon>Catarrhini</taxon>
        <taxon>Hominidae</taxon>
        <taxon>Homo</taxon>
    </lineage>
</organism>
<keyword id="KW-0175">Coiled coil</keyword>
<keyword id="KW-0539">Nucleus</keyword>
<keyword id="KW-0597">Phosphoprotein</keyword>
<keyword id="KW-1267">Proteomics identification</keyword>
<keyword id="KW-1185">Reference proteome</keyword>
<keyword id="KW-0678">Repressor</keyword>
<keyword id="KW-0804">Transcription</keyword>
<keyword id="KW-0805">Transcription regulation</keyword>
<protein>
    <recommendedName>
        <fullName>Protein HEXIM2</fullName>
    </recommendedName>
    <alternativeName>
        <fullName>Hexamethylene bis-acetamide-inducible protein 2</fullName>
    </alternativeName>
</protein>
<reference key="1">
    <citation type="journal article" date="2004" name="Oncogene">
        <title>Suppression subtractive hybridization and expression profiling identifies a unique set of genes overexpressed in non-small-cell lung cancer.</title>
        <authorList>
            <person name="Petroziello J."/>
            <person name="Yamane A."/>
            <person name="Westendorf L."/>
            <person name="Thompson M."/>
            <person name="McDonagh C."/>
            <person name="Cerveny C."/>
            <person name="Law C.-L."/>
            <person name="Wahl A."/>
            <person name="Carter P."/>
        </authorList>
    </citation>
    <scope>NUCLEOTIDE SEQUENCE [MRNA]</scope>
</reference>
<reference key="2">
    <citation type="journal article" date="2004" name="Nat. Genet.">
        <title>Complete sequencing and characterization of 21,243 full-length human cDNAs.</title>
        <authorList>
            <person name="Ota T."/>
            <person name="Suzuki Y."/>
            <person name="Nishikawa T."/>
            <person name="Otsuki T."/>
            <person name="Sugiyama T."/>
            <person name="Irie R."/>
            <person name="Wakamatsu A."/>
            <person name="Hayashi K."/>
            <person name="Sato H."/>
            <person name="Nagai K."/>
            <person name="Kimura K."/>
            <person name="Makita H."/>
            <person name="Sekine M."/>
            <person name="Obayashi M."/>
            <person name="Nishi T."/>
            <person name="Shibahara T."/>
            <person name="Tanaka T."/>
            <person name="Ishii S."/>
            <person name="Yamamoto J."/>
            <person name="Saito K."/>
            <person name="Kawai Y."/>
            <person name="Isono Y."/>
            <person name="Nakamura Y."/>
            <person name="Nagahari K."/>
            <person name="Murakami K."/>
            <person name="Yasuda T."/>
            <person name="Iwayanagi T."/>
            <person name="Wagatsuma M."/>
            <person name="Shiratori A."/>
            <person name="Sudo H."/>
            <person name="Hosoiri T."/>
            <person name="Kaku Y."/>
            <person name="Kodaira H."/>
            <person name="Kondo H."/>
            <person name="Sugawara M."/>
            <person name="Takahashi M."/>
            <person name="Kanda K."/>
            <person name="Yokoi T."/>
            <person name="Furuya T."/>
            <person name="Kikkawa E."/>
            <person name="Omura Y."/>
            <person name="Abe K."/>
            <person name="Kamihara K."/>
            <person name="Katsuta N."/>
            <person name="Sato K."/>
            <person name="Tanikawa M."/>
            <person name="Yamazaki M."/>
            <person name="Ninomiya K."/>
            <person name="Ishibashi T."/>
            <person name="Yamashita H."/>
            <person name="Murakawa K."/>
            <person name="Fujimori K."/>
            <person name="Tanai H."/>
            <person name="Kimata M."/>
            <person name="Watanabe M."/>
            <person name="Hiraoka S."/>
            <person name="Chiba Y."/>
            <person name="Ishida S."/>
            <person name="Ono Y."/>
            <person name="Takiguchi S."/>
            <person name="Watanabe S."/>
            <person name="Yosida M."/>
            <person name="Hotuta T."/>
            <person name="Kusano J."/>
            <person name="Kanehori K."/>
            <person name="Takahashi-Fujii A."/>
            <person name="Hara H."/>
            <person name="Tanase T.-O."/>
            <person name="Nomura Y."/>
            <person name="Togiya S."/>
            <person name="Komai F."/>
            <person name="Hara R."/>
            <person name="Takeuchi K."/>
            <person name="Arita M."/>
            <person name="Imose N."/>
            <person name="Musashino K."/>
            <person name="Yuuki H."/>
            <person name="Oshima A."/>
            <person name="Sasaki N."/>
            <person name="Aotsuka S."/>
            <person name="Yoshikawa Y."/>
            <person name="Matsunawa H."/>
            <person name="Ichihara T."/>
            <person name="Shiohata N."/>
            <person name="Sano S."/>
            <person name="Moriya S."/>
            <person name="Momiyama H."/>
            <person name="Satoh N."/>
            <person name="Takami S."/>
            <person name="Terashima Y."/>
            <person name="Suzuki O."/>
            <person name="Nakagawa S."/>
            <person name="Senoh A."/>
            <person name="Mizoguchi H."/>
            <person name="Goto Y."/>
            <person name="Shimizu F."/>
            <person name="Wakebe H."/>
            <person name="Hishigaki H."/>
            <person name="Watanabe T."/>
            <person name="Sugiyama A."/>
            <person name="Takemoto M."/>
            <person name="Kawakami B."/>
            <person name="Yamazaki M."/>
            <person name="Watanabe K."/>
            <person name="Kumagai A."/>
            <person name="Itakura S."/>
            <person name="Fukuzumi Y."/>
            <person name="Fujimori Y."/>
            <person name="Komiyama M."/>
            <person name="Tashiro H."/>
            <person name="Tanigami A."/>
            <person name="Fujiwara T."/>
            <person name="Ono T."/>
            <person name="Yamada K."/>
            <person name="Fujii Y."/>
            <person name="Ozaki K."/>
            <person name="Hirao M."/>
            <person name="Ohmori Y."/>
            <person name="Kawabata A."/>
            <person name="Hikiji T."/>
            <person name="Kobatake N."/>
            <person name="Inagaki H."/>
            <person name="Ikema Y."/>
            <person name="Okamoto S."/>
            <person name="Okitani R."/>
            <person name="Kawakami T."/>
            <person name="Noguchi S."/>
            <person name="Itoh T."/>
            <person name="Shigeta K."/>
            <person name="Senba T."/>
            <person name="Matsumura K."/>
            <person name="Nakajima Y."/>
            <person name="Mizuno T."/>
            <person name="Morinaga M."/>
            <person name="Sasaki M."/>
            <person name="Togashi T."/>
            <person name="Oyama M."/>
            <person name="Hata H."/>
            <person name="Watanabe M."/>
            <person name="Komatsu T."/>
            <person name="Mizushima-Sugano J."/>
            <person name="Satoh T."/>
            <person name="Shirai Y."/>
            <person name="Takahashi Y."/>
            <person name="Nakagawa K."/>
            <person name="Okumura K."/>
            <person name="Nagase T."/>
            <person name="Nomura N."/>
            <person name="Kikuchi H."/>
            <person name="Masuho Y."/>
            <person name="Yamashita R."/>
            <person name="Nakai K."/>
            <person name="Yada T."/>
            <person name="Nakamura Y."/>
            <person name="Ohara O."/>
            <person name="Isogai T."/>
            <person name="Sugano S."/>
        </authorList>
    </citation>
    <scope>NUCLEOTIDE SEQUENCE [LARGE SCALE MRNA]</scope>
    <source>
        <tissue>Skeletal muscle</tissue>
    </source>
</reference>
<reference key="3">
    <citation type="submission" date="2005-09" db="EMBL/GenBank/DDBJ databases">
        <authorList>
            <person name="Mural R.J."/>
            <person name="Istrail S."/>
            <person name="Sutton G.G."/>
            <person name="Florea L."/>
            <person name="Halpern A.L."/>
            <person name="Mobarry C.M."/>
            <person name="Lippert R."/>
            <person name="Walenz B."/>
            <person name="Shatkay H."/>
            <person name="Dew I."/>
            <person name="Miller J.R."/>
            <person name="Flanigan M.J."/>
            <person name="Edwards N.J."/>
            <person name="Bolanos R."/>
            <person name="Fasulo D."/>
            <person name="Halldorsson B.V."/>
            <person name="Hannenhalli S."/>
            <person name="Turner R."/>
            <person name="Yooseph S."/>
            <person name="Lu F."/>
            <person name="Nusskern D.R."/>
            <person name="Shue B.C."/>
            <person name="Zheng X.H."/>
            <person name="Zhong F."/>
            <person name="Delcher A.L."/>
            <person name="Huson D.H."/>
            <person name="Kravitz S.A."/>
            <person name="Mouchard L."/>
            <person name="Reinert K."/>
            <person name="Remington K.A."/>
            <person name="Clark A.G."/>
            <person name="Waterman M.S."/>
            <person name="Eichler E.E."/>
            <person name="Adams M.D."/>
            <person name="Hunkapiller M.W."/>
            <person name="Myers E.W."/>
            <person name="Venter J.C."/>
        </authorList>
    </citation>
    <scope>NUCLEOTIDE SEQUENCE [LARGE SCALE GENOMIC DNA]</scope>
</reference>
<reference key="4">
    <citation type="journal article" date="2004" name="Genome Res.">
        <title>The status, quality, and expansion of the NIH full-length cDNA project: the Mammalian Gene Collection (MGC).</title>
        <authorList>
            <consortium name="The MGC Project Team"/>
        </authorList>
    </citation>
    <scope>NUCLEOTIDE SEQUENCE [LARGE SCALE MRNA]</scope>
    <source>
        <tissue>Eye</tissue>
        <tissue>Prostate</tissue>
        <tissue>Uterus</tissue>
    </source>
</reference>
<reference key="5">
    <citation type="journal article" date="2005" name="J. Biol. Chem.">
        <title>HEXIM2, a HEXIM1-related protein, regulates positive transcription elongation factor b through association with 7SK.</title>
        <authorList>
            <person name="Byers S.A."/>
            <person name="Price J.P."/>
            <person name="Cooper J.J."/>
            <person name="Li Q."/>
            <person name="Price D.H."/>
        </authorList>
    </citation>
    <scope>FUNCTION</scope>
    <scope>IDENTIFICATION IN THE 7SK SNRNP COMPLEX</scope>
    <scope>MUTAGENESIS OF THR-143</scope>
</reference>
<reference key="6">
    <citation type="journal article" date="2005" name="J. Biol. Chem.">
        <title>Compensatory contributions of HEXIM1 and HEXIM2 in maintaining the balance of active and inactive positive transcription elongation factor b complexes for control of transcription.</title>
        <authorList>
            <person name="Yik J.H.N."/>
            <person name="Chen R."/>
            <person name="Pezda A.C."/>
            <person name="Zhou Q."/>
        </authorList>
    </citation>
    <scope>FUNCTION</scope>
    <scope>IDENTIFICATION IN THE 7SK SNRNP COMPLEX</scope>
    <scope>INTERACTION WITH HEXIM1</scope>
    <scope>OLIGOMERIZATION</scope>
    <scope>TISSUE SPECIFICITY</scope>
    <scope>INDUCTION</scope>
</reference>
<reference key="7">
    <citation type="journal article" date="2005" name="J. Biol. Chem.">
        <title>Transcription-dependent association of multiple positive transcription elongation factor units to a HEXIM multimer.</title>
        <authorList>
            <person name="Dulac C."/>
            <person name="Michels A.A."/>
            <person name="Fraldi A."/>
            <person name="Bonnet F."/>
            <person name="Nguyen V.T."/>
            <person name="Napolitano G."/>
            <person name="Lania L."/>
            <person name="Bensaude O."/>
        </authorList>
    </citation>
    <scope>OLIGOMERIZATION</scope>
    <scope>INTERACTION WITH CCNT1</scope>
    <scope>SUBCELLULAR LOCATION</scope>
</reference>
<reference key="8">
    <citation type="journal article" date="2008" name="J. Proteome Res.">
        <title>Combining protein-based IMAC, peptide-based IMAC, and MudPIT for efficient phosphoproteomic analysis.</title>
        <authorList>
            <person name="Cantin G.T."/>
            <person name="Yi W."/>
            <person name="Lu B."/>
            <person name="Park S.K."/>
            <person name="Xu T."/>
            <person name="Lee J.-D."/>
            <person name="Yates J.R. III"/>
        </authorList>
    </citation>
    <scope>PHOSPHORYLATION [LARGE SCALE ANALYSIS] AT THR-46</scope>
    <scope>IDENTIFICATION BY MASS SPECTROMETRY [LARGE SCALE ANALYSIS]</scope>
    <source>
        <tissue>Cervix carcinoma</tissue>
    </source>
</reference>
<reference key="9">
    <citation type="journal article" date="2008" name="Proc. Natl. Acad. Sci. U.S.A.">
        <title>A quantitative atlas of mitotic phosphorylation.</title>
        <authorList>
            <person name="Dephoure N."/>
            <person name="Zhou C."/>
            <person name="Villen J."/>
            <person name="Beausoleil S.A."/>
            <person name="Bakalarski C.E."/>
            <person name="Elledge S.J."/>
            <person name="Gygi S.P."/>
        </authorList>
    </citation>
    <scope>PHOSPHORYLATION [LARGE SCALE ANALYSIS] AT SER-29; THR-32; THR-46; SER-51; SER-53; SER-71; SER-76 AND SER-81</scope>
    <scope>IDENTIFICATION BY MASS SPECTROMETRY [LARGE SCALE ANALYSIS]</scope>
    <source>
        <tissue>Cervix carcinoma</tissue>
    </source>
</reference>
<reference key="10">
    <citation type="journal article" date="2009" name="Anal. Chem.">
        <title>Lys-N and trypsin cover complementary parts of the phosphoproteome in a refined SCX-based approach.</title>
        <authorList>
            <person name="Gauci S."/>
            <person name="Helbig A.O."/>
            <person name="Slijper M."/>
            <person name="Krijgsveld J."/>
            <person name="Heck A.J."/>
            <person name="Mohammed S."/>
        </authorList>
    </citation>
    <scope>IDENTIFICATION BY MASS SPECTROMETRY [LARGE SCALE ANALYSIS]</scope>
</reference>
<reference key="11">
    <citation type="journal article" date="2009" name="Mol. Cell. Proteomics">
        <title>Large-scale proteomics analysis of the human kinome.</title>
        <authorList>
            <person name="Oppermann F.S."/>
            <person name="Gnad F."/>
            <person name="Olsen J.V."/>
            <person name="Hornberger R."/>
            <person name="Greff Z."/>
            <person name="Keri G."/>
            <person name="Mann M."/>
            <person name="Daub H."/>
        </authorList>
    </citation>
    <scope>IDENTIFICATION BY MASS SPECTROMETRY [LARGE SCALE ANALYSIS]</scope>
</reference>
<reference key="12">
    <citation type="journal article" date="2010" name="J. Mol. Biol.">
        <title>Specificity of Hexim1 and Hexim2 complex formation with cyclin T1/T2, importin alpha and 7SK snRNA.</title>
        <authorList>
            <person name="Czudnochowski N."/>
            <person name="Vollmuth F."/>
            <person name="Baumann S."/>
            <person name="Vogel-Bachmayr K."/>
            <person name="Geyer M."/>
        </authorList>
    </citation>
    <scope>INTERACTION WITH CCNT2</scope>
</reference>
<reference key="13">
    <citation type="journal article" date="2010" name="Sci. Signal.">
        <title>Quantitative phosphoproteomics reveals widespread full phosphorylation site occupancy during mitosis.</title>
        <authorList>
            <person name="Olsen J.V."/>
            <person name="Vermeulen M."/>
            <person name="Santamaria A."/>
            <person name="Kumar C."/>
            <person name="Miller M.L."/>
            <person name="Jensen L.J."/>
            <person name="Gnad F."/>
            <person name="Cox J."/>
            <person name="Jensen T.S."/>
            <person name="Nigg E.A."/>
            <person name="Brunak S."/>
            <person name="Mann M."/>
        </authorList>
    </citation>
    <scope>PHOSPHORYLATION [LARGE SCALE ANALYSIS] AT SER-51 AND SER-53</scope>
    <scope>IDENTIFICATION BY MASS SPECTROMETRY [LARGE SCALE ANALYSIS]</scope>
    <source>
        <tissue>Cervix carcinoma</tissue>
    </source>
</reference>
<reference key="14">
    <citation type="journal article" date="2011" name="Sci. Signal.">
        <title>System-wide temporal characterization of the proteome and phosphoproteome of human embryonic stem cell differentiation.</title>
        <authorList>
            <person name="Rigbolt K.T."/>
            <person name="Prokhorova T.A."/>
            <person name="Akimov V."/>
            <person name="Henningsen J."/>
            <person name="Johansen P.T."/>
            <person name="Kratchmarova I."/>
            <person name="Kassem M."/>
            <person name="Mann M."/>
            <person name="Olsen J.V."/>
            <person name="Blagoev B."/>
        </authorList>
    </citation>
    <scope>PHOSPHORYLATION [LARGE SCALE ANALYSIS] AT SER-51 AND SER-53</scope>
    <scope>IDENTIFICATION BY MASS SPECTROMETRY [LARGE SCALE ANALYSIS]</scope>
</reference>
<reference key="15">
    <citation type="journal article" date="2013" name="J. Proteome Res.">
        <title>Toward a comprehensive characterization of a human cancer cell phosphoproteome.</title>
        <authorList>
            <person name="Zhou H."/>
            <person name="Di Palma S."/>
            <person name="Preisinger C."/>
            <person name="Peng M."/>
            <person name="Polat A.N."/>
            <person name="Heck A.J."/>
            <person name="Mohammed S."/>
        </authorList>
    </citation>
    <scope>PHOSPHORYLATION [LARGE SCALE ANALYSIS] AT SER-29 AND SER-76</scope>
    <scope>IDENTIFICATION BY MASS SPECTROMETRY [LARGE SCALE ANALYSIS]</scope>
    <source>
        <tissue>Cervix carcinoma</tissue>
        <tissue>Erythroleukemia</tissue>
    </source>
</reference>
<reference key="16">
    <citation type="journal article" date="2014" name="J. Proteomics">
        <title>An enzyme assisted RP-RPLC approach for in-depth analysis of human liver phosphoproteome.</title>
        <authorList>
            <person name="Bian Y."/>
            <person name="Song C."/>
            <person name="Cheng K."/>
            <person name="Dong M."/>
            <person name="Wang F."/>
            <person name="Huang J."/>
            <person name="Sun D."/>
            <person name="Wang L."/>
            <person name="Ye M."/>
            <person name="Zou H."/>
        </authorList>
    </citation>
    <scope>PHOSPHORYLATION [LARGE SCALE ANALYSIS] AT SER-29; THR-32; SER-39; SER-51; SER-53 AND SER-76</scope>
    <scope>IDENTIFICATION BY MASS SPECTROMETRY [LARGE SCALE ANALYSIS]</scope>
    <source>
        <tissue>Liver</tissue>
    </source>
</reference>
<gene>
    <name type="primary">HEXIM2</name>
    <name type="ORF">L3</name>
</gene>
<name>HEXI2_HUMAN</name>
<sequence>MMATPNQTACNAESPVALEEAKTSGAPGSPQTPPERHDSGGSLPLTPRMESHSEDEDLAGAVGGLGWNSRSPRTQSPGGCSAEAVLARKKHRRRPSKRKRHWRPYLELSWAEKQQRDERQSQRASRVREEMFAKGQPVAPYNTTQFLMNDRDPEEPNLDVPHGISHPGSSGESEAGDSDGRGRAHGEFQRKDFSETYERFHTESLQGRSKQELVRDYLELEKRLSQAEEETRRLQQLQACTGQQSCRQVEELAAEVQRLRTENQRLRQENQMWNREGCRCDEEPGT</sequence>
<accession>Q96MH2</accession>
<accession>D3DX66</accession>
<proteinExistence type="evidence at protein level"/>
<evidence type="ECO:0000255" key="1"/>
<evidence type="ECO:0000256" key="2">
    <source>
        <dbReference type="SAM" id="MobiDB-lite"/>
    </source>
</evidence>
<evidence type="ECO:0000269" key="3">
    <source>
    </source>
</evidence>
<evidence type="ECO:0000269" key="4">
    <source>
    </source>
</evidence>
<evidence type="ECO:0000269" key="5">
    <source>
    </source>
</evidence>
<evidence type="ECO:0000269" key="6">
    <source>
    </source>
</evidence>
<evidence type="ECO:0000305" key="7"/>
<evidence type="ECO:0007744" key="8">
    <source>
    </source>
</evidence>
<evidence type="ECO:0007744" key="9">
    <source>
    </source>
</evidence>
<evidence type="ECO:0007744" key="10">
    <source>
    </source>
</evidence>
<evidence type="ECO:0007744" key="11">
    <source>
    </source>
</evidence>
<evidence type="ECO:0007744" key="12">
    <source>
    </source>
</evidence>
<evidence type="ECO:0007744" key="13">
    <source>
    </source>
</evidence>
<comment type="function">
    <text evidence="3 4">Transcriptional regulator which functions as a general RNA polymerase II transcription inhibitor (PubMed:15713661, PubMed:15713662). Core component of the 7SK RNP complex: in cooperation with 7SK snRNA sequesters P-TEFb in a large inactive 7SK snRNP complex preventing RNA polymerase II phosphorylation and subsequent transcriptional elongation (PubMed:15713661, PubMed:15713662).</text>
</comment>
<comment type="subunit">
    <text evidence="3 4 5 6">Homooligomer and heterooligomer with HEXIM1; probably dimeric (PubMed:15713661, PubMed:15994294). Core component of the 7SK RNP complex, at least composed of 7SK RNA, LARP7, MEPCE, HEXIM1 (or HEXIM2) and P-TEFb (composed of CDK9 and CCNT1/cyclin-T1) (PubMed:15713661, PubMed:15713662, PubMed:15994294). Interacts with CCNT2 (PubMed:19883659).</text>
</comment>
<comment type="interaction">
    <interactant intactId="EBI-5460660">
        <id>Q96MH2</id>
    </interactant>
    <interactant intactId="EBI-10173507">
        <id>Q6UY14-3</id>
        <label>ADAMTSL4</label>
    </interactant>
    <organismsDiffer>false</organismsDiffer>
    <experiments>3</experiments>
</comment>
<comment type="interaction">
    <interactant intactId="EBI-5460660">
        <id>Q96MH2</id>
    </interactant>
    <interactant intactId="EBI-2371423">
        <id>O43865</id>
        <label>AHCYL1</label>
    </interactant>
    <organismsDiffer>false</organismsDiffer>
    <experiments>6</experiments>
</comment>
<comment type="interaction">
    <interactant intactId="EBI-5460660">
        <id>Q96MH2</id>
    </interactant>
    <interactant intactId="EBI-297683">
        <id>Q96CW1</id>
        <label>AP2M1</label>
    </interactant>
    <organismsDiffer>false</organismsDiffer>
    <experiments>3</experiments>
</comment>
<comment type="interaction">
    <interactant intactId="EBI-5460660">
        <id>Q96MH2</id>
    </interactant>
    <interactant intactId="EBI-2874501">
        <id>Q08289</id>
        <label>CACNB2</label>
    </interactant>
    <organismsDiffer>false</organismsDiffer>
    <experiments>3</experiments>
</comment>
<comment type="interaction">
    <interactant intactId="EBI-5460660">
        <id>Q96MH2</id>
    </interactant>
    <interactant intactId="EBI-9038570">
        <id>P27918</id>
        <label>CFP</label>
    </interactant>
    <organismsDiffer>false</organismsDiffer>
    <experiments>3</experiments>
</comment>
<comment type="interaction">
    <interactant intactId="EBI-5460660">
        <id>Q96MH2</id>
    </interactant>
    <interactant intactId="EBI-12180013">
        <id>O43310-2</id>
        <label>CTIF</label>
    </interactant>
    <organismsDiffer>false</organismsDiffer>
    <experiments>3</experiments>
</comment>
<comment type="interaction">
    <interactant intactId="EBI-5460660">
        <id>Q96MH2</id>
    </interactant>
    <interactant intactId="EBI-12205861">
        <id>Q8NFT6-2</id>
        <label>DBF4B</label>
    </interactant>
    <organismsDiffer>false</organismsDiffer>
    <experiments>3</experiments>
</comment>
<comment type="interaction">
    <interactant intactId="EBI-5460660">
        <id>Q96MH2</id>
    </interactant>
    <interactant intactId="EBI-949532">
        <id>Q9UHF1</id>
        <label>EGFL7</label>
    </interactant>
    <organismsDiffer>false</organismsDiffer>
    <experiments>3</experiments>
</comment>
<comment type="interaction">
    <interactant intactId="EBI-5460660">
        <id>Q96MH2</id>
    </interactant>
    <interactant intactId="EBI-719941">
        <id>Q3B820</id>
        <label>FAM161A</label>
    </interactant>
    <organismsDiffer>false</organismsDiffer>
    <experiments>3</experiments>
</comment>
<comment type="interaction">
    <interactant intactId="EBI-5460660">
        <id>Q96MH2</id>
    </interactant>
    <interactant intactId="EBI-1052570">
        <id>O95995</id>
        <label>GAS8</label>
    </interactant>
    <organismsDiffer>false</organismsDiffer>
    <experiments>3</experiments>
</comment>
<comment type="interaction">
    <interactant intactId="EBI-5460660">
        <id>Q96MH2</id>
    </interactant>
    <interactant intactId="EBI-3909284">
        <id>P15976</id>
        <label>GATA1</label>
    </interactant>
    <organismsDiffer>false</organismsDiffer>
    <experiments>3</experiments>
</comment>
<comment type="interaction">
    <interactant intactId="EBI-5460660">
        <id>Q96MH2</id>
    </interactant>
    <interactant intactId="EBI-2832510">
        <id>O94992</id>
        <label>HEXIM1</label>
    </interactant>
    <organismsDiffer>false</organismsDiffer>
    <experiments>7</experiments>
</comment>
<comment type="interaction">
    <interactant intactId="EBI-5460660">
        <id>Q96MH2</id>
    </interactant>
    <interactant intactId="EBI-5460660">
        <id>Q96MH2</id>
        <label>HEXIM2</label>
    </interactant>
    <organismsDiffer>false</organismsDiffer>
    <experiments>5</experiments>
</comment>
<comment type="interaction">
    <interactant intactId="EBI-5460660">
        <id>Q96MH2</id>
    </interactant>
    <interactant intactId="EBI-740785">
        <id>P49639</id>
        <label>HOXA1</label>
    </interactant>
    <organismsDiffer>false</organismsDiffer>
    <experiments>3</experiments>
</comment>
<comment type="interaction">
    <interactant intactId="EBI-5460660">
        <id>Q96MH2</id>
    </interactant>
    <interactant intactId="EBI-7116203">
        <id>O75031</id>
        <label>HSF2BP</label>
    </interactant>
    <organismsDiffer>false</organismsDiffer>
    <experiments>3</experiments>
</comment>
<comment type="interaction">
    <interactant intactId="EBI-5460660">
        <id>Q96MH2</id>
    </interactant>
    <interactant intactId="EBI-8638439">
        <id>Q8IYA8</id>
        <label>IHO1</label>
    </interactant>
    <organismsDiffer>false</organismsDiffer>
    <experiments>3</experiments>
</comment>
<comment type="interaction">
    <interactant intactId="EBI-5460660">
        <id>Q96MH2</id>
    </interactant>
    <interactant intactId="EBI-358297">
        <id>O00505</id>
        <label>KPNA3</label>
    </interactant>
    <organismsDiffer>false</organismsDiffer>
    <experiments>3</experiments>
</comment>
<comment type="interaction">
    <interactant intactId="EBI-5460660">
        <id>Q96MH2</id>
    </interactant>
    <interactant intactId="EBI-10981970">
        <id>Q5T749</id>
        <label>KPRP</label>
    </interactant>
    <organismsDiffer>false</organismsDiffer>
    <experiments>3</experiments>
</comment>
<comment type="interaction">
    <interactant intactId="EBI-5460660">
        <id>Q96MH2</id>
    </interactant>
    <interactant intactId="EBI-10241252">
        <id>Q3SY46</id>
        <label>KRTAP13-3</label>
    </interactant>
    <organismsDiffer>false</organismsDiffer>
    <experiments>3</experiments>
</comment>
<comment type="interaction">
    <interactant intactId="EBI-5460660">
        <id>Q96MH2</id>
    </interactant>
    <interactant intactId="EBI-739832">
        <id>Q8TBB1</id>
        <label>LNX1</label>
    </interactant>
    <organismsDiffer>false</organismsDiffer>
    <experiments>5</experiments>
</comment>
<comment type="interaction">
    <interactant intactId="EBI-5460660">
        <id>Q96MH2</id>
    </interactant>
    <interactant intactId="EBI-748397">
        <id>P50222</id>
        <label>MEOX2</label>
    </interactant>
    <organismsDiffer>false</organismsDiffer>
    <experiments>3</experiments>
</comment>
<comment type="interaction">
    <interactant intactId="EBI-5460660">
        <id>Q96MH2</id>
    </interactant>
    <interactant intactId="EBI-16439278">
        <id>Q6FHY5</id>
        <label>MEOX2</label>
    </interactant>
    <organismsDiffer>false</organismsDiffer>
    <experiments>3</experiments>
</comment>
<comment type="interaction">
    <interactant intactId="EBI-5460660">
        <id>Q96MH2</id>
    </interactant>
    <interactant intactId="EBI-79165">
        <id>Q9NRD5</id>
        <label>PICK1</label>
    </interactant>
    <organismsDiffer>false</organismsDiffer>
    <experiments>3</experiments>
</comment>
<comment type="interaction">
    <interactant intactId="EBI-5460660">
        <id>Q96MH2</id>
    </interactant>
    <interactant intactId="EBI-696621">
        <id>P11309</id>
        <label>PIM1</label>
    </interactant>
    <organismsDiffer>false</organismsDiffer>
    <experiments>3</experiments>
</comment>
<comment type="interaction">
    <interactant intactId="EBI-5460660">
        <id>Q96MH2</id>
    </interactant>
    <interactant intactId="EBI-714158">
        <id>Q13526</id>
        <label>PIN1</label>
    </interactant>
    <organismsDiffer>false</organismsDiffer>
    <experiments>6</experiments>
</comment>
<comment type="interaction">
    <interactant intactId="EBI-5460660">
        <id>Q96MH2</id>
    </interactant>
    <interactant intactId="EBI-3957793">
        <id>Q9GZV8</id>
        <label>PRDM14</label>
    </interactant>
    <organismsDiffer>false</organismsDiffer>
    <experiments>4</experiments>
</comment>
<comment type="interaction">
    <interactant intactId="EBI-5460660">
        <id>Q96MH2</id>
    </interactant>
    <interactant intactId="EBI-359352">
        <id>P25786</id>
        <label>PSMA1</label>
    </interactant>
    <organismsDiffer>false</organismsDiffer>
    <experiments>3</experiments>
</comment>
<comment type="interaction">
    <interactant intactId="EBI-5460660">
        <id>Q96MH2</id>
    </interactant>
    <interactant intactId="EBI-10176640">
        <id>D3DU92</id>
        <label>rnps1</label>
    </interactant>
    <organismsDiffer>false</organismsDiffer>
    <experiments>3</experiments>
</comment>
<comment type="interaction">
    <interactant intactId="EBI-5460660">
        <id>Q96MH2</id>
    </interactant>
    <interactant intactId="EBI-395959">
        <id>Q15287</id>
        <label>RNPS1</label>
    </interactant>
    <organismsDiffer>false</organismsDiffer>
    <experiments>3</experiments>
</comment>
<comment type="interaction">
    <interactant intactId="EBI-5460660">
        <id>Q96MH2</id>
    </interactant>
    <interactant intactId="EBI-3957636">
        <id>Q8IYX7</id>
        <label>SAXO1</label>
    </interactant>
    <organismsDiffer>false</organismsDiffer>
    <experiments>3</experiments>
</comment>
<comment type="interaction">
    <interactant intactId="EBI-5460660">
        <id>Q96MH2</id>
    </interactant>
    <interactant intactId="EBI-727004">
        <id>O00560</id>
        <label>SDCBP</label>
    </interactant>
    <organismsDiffer>false</organismsDiffer>
    <experiments>3</experiments>
</comment>
<comment type="interaction">
    <interactant intactId="EBI-5460660">
        <id>Q96MH2</id>
    </interactant>
    <interactant intactId="EBI-5235340">
        <id>Q7Z699</id>
        <label>SPRED1</label>
    </interactant>
    <organismsDiffer>false</organismsDiffer>
    <experiments>3</experiments>
</comment>
<comment type="interaction">
    <interactant intactId="EBI-5460660">
        <id>Q96MH2</id>
    </interactant>
    <interactant intactId="EBI-3866665">
        <id>O43609</id>
        <label>SPRY1</label>
    </interactant>
    <organismsDiffer>false</organismsDiffer>
    <experiments>3</experiments>
</comment>
<comment type="interaction">
    <interactant intactId="EBI-5460660">
        <id>Q96MH2</id>
    </interactant>
    <interactant intactId="EBI-742487">
        <id>O43597</id>
        <label>SPRY2</label>
    </interactant>
    <organismsDiffer>false</organismsDiffer>
    <experiments>3</experiments>
</comment>
<comment type="interaction">
    <interactant intactId="EBI-5460660">
        <id>Q96MH2</id>
    </interactant>
    <interactant intactId="EBI-473249">
        <id>O75528</id>
        <label>TADA3</label>
    </interactant>
    <organismsDiffer>false</organismsDiffer>
    <experiments>3</experiments>
</comment>
<comment type="interaction">
    <interactant intactId="EBI-5460660">
        <id>Q96MH2</id>
    </interactant>
    <interactant intactId="EBI-722877">
        <id>Q99081</id>
        <label>TCF12</label>
    </interactant>
    <organismsDiffer>false</organismsDiffer>
    <experiments>6</experiments>
</comment>
<comment type="interaction">
    <interactant intactId="EBI-5460660">
        <id>Q96MH2</id>
    </interactant>
    <interactant intactId="EBI-11952764">
        <id>Q99081-3</id>
        <label>TCF12</label>
    </interactant>
    <organismsDiffer>false</organismsDiffer>
    <experiments>4</experiments>
</comment>
<comment type="interaction">
    <interactant intactId="EBI-5460660">
        <id>Q96MH2</id>
    </interactant>
    <interactant intactId="EBI-710997">
        <id>P54274</id>
        <label>TERF1</label>
    </interactant>
    <organismsDiffer>false</organismsDiffer>
    <experiments>2</experiments>
</comment>
<comment type="interaction">
    <interactant intactId="EBI-5460660">
        <id>Q96MH2</id>
    </interactant>
    <interactant intactId="EBI-11741437">
        <id>Q08117-2</id>
        <label>TLE5</label>
    </interactant>
    <organismsDiffer>false</organismsDiffer>
    <experiments>3</experiments>
</comment>
<comment type="interaction">
    <interactant intactId="EBI-5460660">
        <id>Q96MH2</id>
    </interactant>
    <interactant intactId="EBI-2505861">
        <id>Q13829</id>
        <label>TNFAIP1</label>
    </interactant>
    <organismsDiffer>false</organismsDiffer>
    <experiments>3</experiments>
</comment>
<comment type="interaction">
    <interactant intactId="EBI-5460660">
        <id>Q96MH2</id>
    </interactant>
    <interactant intactId="EBI-2820256">
        <id>Q14142</id>
        <label>TRIM14</label>
    </interactant>
    <organismsDiffer>false</organismsDiffer>
    <experiments>3</experiments>
</comment>
<comment type="interaction">
    <interactant intactId="EBI-5460660">
        <id>Q96MH2</id>
    </interactant>
    <interactant intactId="EBI-743265">
        <id>Q9BUY5</id>
        <label>ZNF426</label>
    </interactant>
    <organismsDiffer>false</organismsDiffer>
    <experiments>5</experiments>
</comment>
<comment type="interaction">
    <interactant intactId="EBI-5460660">
        <id>Q96MH2</id>
    </interactant>
    <interactant intactId="EBI-18234077">
        <id>O60304</id>
        <label>ZNF500</label>
    </interactant>
    <organismsDiffer>false</organismsDiffer>
    <experiments>3</experiments>
</comment>
<comment type="interaction">
    <interactant intactId="EBI-5460660">
        <id>Q96MH2</id>
    </interactant>
    <interactant intactId="EBI-373363">
        <id>Q96NG5</id>
        <label>ZNF558</label>
    </interactant>
    <organismsDiffer>false</organismsDiffer>
    <experiments>3</experiments>
</comment>
<comment type="interaction">
    <interactant intactId="EBI-5460660">
        <id>Q96MH2</id>
    </interactant>
    <interactant intactId="EBI-625509">
        <id>Q8N720</id>
        <label>ZNF655</label>
    </interactant>
    <organismsDiffer>false</organismsDiffer>
    <experiments>3</experiments>
</comment>
<comment type="interaction">
    <interactant intactId="EBI-5460660">
        <id>Q96MH2</id>
    </interactant>
    <interactant intactId="EBI-10217363">
        <id>Q32M78</id>
        <label>ZNF699</label>
    </interactant>
    <organismsDiffer>false</organismsDiffer>
    <experiments>3</experiments>
</comment>
<comment type="interaction">
    <interactant intactId="EBI-5460660">
        <id>Q96MH2</id>
    </interactant>
    <interactant intactId="EBI-13076752">
        <id>Q5FWF6</id>
        <label>ZNF789</label>
    </interactant>
    <organismsDiffer>false</organismsDiffer>
    <experiments>3</experiments>
</comment>
<comment type="subcellular location">
    <subcellularLocation>
        <location evidence="5">Nucleus</location>
    </subcellularLocation>
</comment>
<comment type="tissue specificity">
    <text evidence="3">Ubiquitously expressed with higher expression in testis. HEXIM1 and HEXIM2 are differentially expressed.</text>
</comment>
<comment type="induction">
    <text evidence="3">Up-regulated by HMBA (hexamethylene bisacetamide) (at protein level).</text>
</comment>
<comment type="domain">
    <text>The coiled-coil domain mediates oligomerization.</text>
</comment>
<comment type="similarity">
    <text evidence="7">Belongs to the HEXIM family.</text>
</comment>
<feature type="chain" id="PRO_0000305267" description="Protein HEXIM2">
    <location>
        <begin position="1"/>
        <end position="286"/>
    </location>
</feature>
<feature type="region of interest" description="Disordered" evidence="2">
    <location>
        <begin position="1"/>
        <end position="195"/>
    </location>
</feature>
<feature type="region of interest" description="Interaction with P-TEFb">
    <location>
        <begin position="140"/>
        <end position="143"/>
    </location>
</feature>
<feature type="region of interest" description="Interaction with CCNT1, HEXIM1 and HEXIM2" evidence="3 5">
    <location>
        <begin position="226"/>
        <end position="286"/>
    </location>
</feature>
<feature type="coiled-coil region" evidence="1">
    <location>
        <begin position="207"/>
        <end position="277"/>
    </location>
</feature>
<feature type="compositionally biased region" description="Polar residues" evidence="2">
    <location>
        <begin position="1"/>
        <end position="11"/>
    </location>
</feature>
<feature type="compositionally biased region" description="Polar residues" evidence="2">
    <location>
        <begin position="68"/>
        <end position="78"/>
    </location>
</feature>
<feature type="compositionally biased region" description="Basic residues" evidence="2">
    <location>
        <begin position="87"/>
        <end position="103"/>
    </location>
</feature>
<feature type="compositionally biased region" description="Basic and acidic residues" evidence="2">
    <location>
        <begin position="113"/>
        <end position="132"/>
    </location>
</feature>
<feature type="compositionally biased region" description="Basic and acidic residues" evidence="2">
    <location>
        <begin position="178"/>
        <end position="195"/>
    </location>
</feature>
<feature type="modified residue" description="Phosphoserine" evidence="9 12 13">
    <location>
        <position position="29"/>
    </location>
</feature>
<feature type="modified residue" description="Phosphothreonine" evidence="9 13">
    <location>
        <position position="32"/>
    </location>
</feature>
<feature type="modified residue" description="Phosphoserine" evidence="13">
    <location>
        <position position="39"/>
    </location>
</feature>
<feature type="modified residue" description="Phosphothreonine" evidence="8 9">
    <location>
        <position position="46"/>
    </location>
</feature>
<feature type="modified residue" description="Phosphoserine" evidence="9 10 11 13">
    <location>
        <position position="51"/>
    </location>
</feature>
<feature type="modified residue" description="Phosphoserine" evidence="9 10 11 13">
    <location>
        <position position="53"/>
    </location>
</feature>
<feature type="modified residue" description="Phosphoserine" evidence="9">
    <location>
        <position position="71"/>
    </location>
</feature>
<feature type="modified residue" description="Phosphoserine" evidence="9 12 13">
    <location>
        <position position="76"/>
    </location>
</feature>
<feature type="modified residue" description="Phosphoserine" evidence="9">
    <location>
        <position position="81"/>
    </location>
</feature>
<feature type="mutagenesis site" description="Loss of interaction with P-TEFb." evidence="4">
    <original>T</original>
    <variation>A</variation>
    <location>
        <position position="143"/>
    </location>
</feature>
<feature type="mutagenesis site" description="Loss of interaction with P-TEFb." evidence="4">
    <original>T</original>
    <variation>D</variation>
    <location>
        <position position="143"/>
    </location>
</feature>
<dbReference type="EMBL" id="AY598322">
    <property type="protein sequence ID" value="AAT06733.1"/>
    <property type="molecule type" value="mRNA"/>
</dbReference>
<dbReference type="EMBL" id="AK056946">
    <property type="protein sequence ID" value="BAB71319.1"/>
    <property type="molecule type" value="mRNA"/>
</dbReference>
<dbReference type="EMBL" id="CH471178">
    <property type="protein sequence ID" value="EAW51541.1"/>
    <property type="molecule type" value="Genomic_DNA"/>
</dbReference>
<dbReference type="EMBL" id="CH471178">
    <property type="protein sequence ID" value="EAW51542.1"/>
    <property type="molecule type" value="Genomic_DNA"/>
</dbReference>
<dbReference type="EMBL" id="BC003531">
    <property type="protein sequence ID" value="AAH03531.1"/>
    <property type="molecule type" value="mRNA"/>
</dbReference>
<dbReference type="EMBL" id="BC012474">
    <property type="protein sequence ID" value="AAH12474.1"/>
    <property type="molecule type" value="mRNA"/>
</dbReference>
<dbReference type="EMBL" id="BC025970">
    <property type="protein sequence ID" value="AAH25970.1"/>
    <property type="molecule type" value="mRNA"/>
</dbReference>
<dbReference type="CCDS" id="CCDS11496.1"/>
<dbReference type="RefSeq" id="NP_001290365.1">
    <property type="nucleotide sequence ID" value="NM_001303436.1"/>
</dbReference>
<dbReference type="RefSeq" id="NP_001290366.1">
    <property type="nucleotide sequence ID" value="NM_001303437.1"/>
</dbReference>
<dbReference type="RefSeq" id="NP_001290367.1">
    <property type="nucleotide sequence ID" value="NM_001303438.1"/>
</dbReference>
<dbReference type="RefSeq" id="NP_001290368.1">
    <property type="nucleotide sequence ID" value="NM_001303439.1"/>
</dbReference>
<dbReference type="RefSeq" id="NP_001290369.1">
    <property type="nucleotide sequence ID" value="NM_001303440.2"/>
</dbReference>
<dbReference type="RefSeq" id="NP_001290370.1">
    <property type="nucleotide sequence ID" value="NM_001303441.2"/>
</dbReference>
<dbReference type="RefSeq" id="NP_001290371.1">
    <property type="nucleotide sequence ID" value="NM_001303442.2"/>
</dbReference>
<dbReference type="RefSeq" id="NP_001290372.1">
    <property type="nucleotide sequence ID" value="NM_001303443.2"/>
</dbReference>
<dbReference type="RefSeq" id="NP_001290373.1">
    <property type="nucleotide sequence ID" value="NM_001303444.2"/>
</dbReference>
<dbReference type="RefSeq" id="NP_653209.1">
    <property type="nucleotide sequence ID" value="NM_144608.2"/>
</dbReference>
<dbReference type="RefSeq" id="XP_011522608.1">
    <property type="nucleotide sequence ID" value="XM_011524306.2"/>
</dbReference>
<dbReference type="RefSeq" id="XP_016879656.1">
    <property type="nucleotide sequence ID" value="XM_017024167.1"/>
</dbReference>
<dbReference type="RefSeq" id="XP_016879657.1">
    <property type="nucleotide sequence ID" value="XM_017024168.1"/>
</dbReference>
<dbReference type="RefSeq" id="XP_016879658.1">
    <property type="nucleotide sequence ID" value="XM_017024169.1"/>
</dbReference>
<dbReference type="RefSeq" id="XP_016879659.1">
    <property type="nucleotide sequence ID" value="XM_017024170.1"/>
</dbReference>
<dbReference type="RefSeq" id="XP_047291279.1">
    <property type="nucleotide sequence ID" value="XM_047435323.1"/>
</dbReference>
<dbReference type="RefSeq" id="XP_047291280.1">
    <property type="nucleotide sequence ID" value="XM_047435324.1"/>
</dbReference>
<dbReference type="RefSeq" id="XP_054170995.1">
    <property type="nucleotide sequence ID" value="XM_054315020.1"/>
</dbReference>
<dbReference type="RefSeq" id="XP_054170996.1">
    <property type="nucleotide sequence ID" value="XM_054315021.1"/>
</dbReference>
<dbReference type="SMR" id="Q96MH2"/>
<dbReference type="BioGRID" id="125888">
    <property type="interactions" value="84"/>
</dbReference>
<dbReference type="FunCoup" id="Q96MH2">
    <property type="interactions" value="1307"/>
</dbReference>
<dbReference type="IntAct" id="Q96MH2">
    <property type="interactions" value="72"/>
</dbReference>
<dbReference type="MINT" id="Q96MH2"/>
<dbReference type="STRING" id="9606.ENSP00000302276"/>
<dbReference type="iPTMnet" id="Q96MH2"/>
<dbReference type="PhosphoSitePlus" id="Q96MH2"/>
<dbReference type="BioMuta" id="HEXIM2"/>
<dbReference type="DMDM" id="74732374"/>
<dbReference type="jPOST" id="Q96MH2"/>
<dbReference type="MassIVE" id="Q96MH2"/>
<dbReference type="PaxDb" id="9606-ENSP00000302276"/>
<dbReference type="PeptideAtlas" id="Q96MH2"/>
<dbReference type="ProteomicsDB" id="77356"/>
<dbReference type="Pumba" id="Q96MH2"/>
<dbReference type="Antibodypedia" id="17593">
    <property type="antibodies" value="163 antibodies from 29 providers"/>
</dbReference>
<dbReference type="DNASU" id="124790"/>
<dbReference type="Ensembl" id="ENST00000307275.7">
    <property type="protein sequence ID" value="ENSP00000302276.2"/>
    <property type="gene ID" value="ENSG00000168517.11"/>
</dbReference>
<dbReference type="Ensembl" id="ENST00000585340.2">
    <property type="protein sequence ID" value="ENSP00000468251.2"/>
    <property type="gene ID" value="ENSG00000168517.11"/>
</dbReference>
<dbReference type="Ensembl" id="ENST00000586681.6">
    <property type="protein sequence ID" value="ENSP00000465086.2"/>
    <property type="gene ID" value="ENSG00000168517.11"/>
</dbReference>
<dbReference type="Ensembl" id="ENST00000589230.6">
    <property type="protein sequence ID" value="ENSP00000466200.2"/>
    <property type="gene ID" value="ENSG00000168517.11"/>
</dbReference>
<dbReference type="Ensembl" id="ENST00000591070.6">
    <property type="protein sequence ID" value="ENSP00000464807.2"/>
    <property type="gene ID" value="ENSG00000168517.11"/>
</dbReference>
<dbReference type="Ensembl" id="ENST00000591576.5">
    <property type="protein sequence ID" value="ENSP00000465727.1"/>
    <property type="gene ID" value="ENSG00000168517.11"/>
</dbReference>
<dbReference type="Ensembl" id="ENST00000592695.1">
    <property type="protein sequence ID" value="ENSP00000467517.1"/>
    <property type="gene ID" value="ENSG00000168517.11"/>
</dbReference>
<dbReference type="Ensembl" id="ENST00000593138.6">
    <property type="protein sequence ID" value="ENSP00000468773.2"/>
    <property type="gene ID" value="ENSG00000168517.11"/>
</dbReference>
<dbReference type="GeneID" id="124790"/>
<dbReference type="KEGG" id="hsa:124790"/>
<dbReference type="MANE-Select" id="ENST00000589230.6">
    <property type="protein sequence ID" value="ENSP00000466200.2"/>
    <property type="RefSeq nucleotide sequence ID" value="NM_001303441.2"/>
    <property type="RefSeq protein sequence ID" value="NP_001290370.1"/>
</dbReference>
<dbReference type="UCSC" id="uc002iih.2">
    <property type="organism name" value="human"/>
</dbReference>
<dbReference type="AGR" id="HGNC:28591"/>
<dbReference type="CTD" id="124790"/>
<dbReference type="DisGeNET" id="124790"/>
<dbReference type="GeneCards" id="HEXIM2"/>
<dbReference type="HGNC" id="HGNC:28591">
    <property type="gene designation" value="HEXIM2"/>
</dbReference>
<dbReference type="HPA" id="ENSG00000168517">
    <property type="expression patterns" value="Tissue enhanced (skeletal muscle, testis)"/>
</dbReference>
<dbReference type="MIM" id="615695">
    <property type="type" value="gene"/>
</dbReference>
<dbReference type="neXtProt" id="NX_Q96MH2"/>
<dbReference type="OpenTargets" id="ENSG00000168517"/>
<dbReference type="PharmGKB" id="PA142671695"/>
<dbReference type="VEuPathDB" id="HostDB:ENSG00000168517"/>
<dbReference type="eggNOG" id="ENOG502QQP8">
    <property type="taxonomic scope" value="Eukaryota"/>
</dbReference>
<dbReference type="GeneTree" id="ENSGT00390000002808"/>
<dbReference type="HOGENOM" id="CLU_066028_1_0_1"/>
<dbReference type="InParanoid" id="Q96MH2"/>
<dbReference type="OMA" id="MWNREGS"/>
<dbReference type="OrthoDB" id="10058500at2759"/>
<dbReference type="PAN-GO" id="Q96MH2">
    <property type="GO annotations" value="6 GO annotations based on evolutionary models"/>
</dbReference>
<dbReference type="PhylomeDB" id="Q96MH2"/>
<dbReference type="TreeFam" id="TF336851"/>
<dbReference type="PathwayCommons" id="Q96MH2"/>
<dbReference type="SignaLink" id="Q96MH2"/>
<dbReference type="BioGRID-ORCS" id="124790">
    <property type="hits" value="10 hits in 1158 CRISPR screens"/>
</dbReference>
<dbReference type="GeneWiki" id="HEXIM2"/>
<dbReference type="GenomeRNAi" id="124790"/>
<dbReference type="Pharos" id="Q96MH2">
    <property type="development level" value="Tbio"/>
</dbReference>
<dbReference type="PRO" id="PR:Q96MH2"/>
<dbReference type="Proteomes" id="UP000005640">
    <property type="component" value="Chromosome 17"/>
</dbReference>
<dbReference type="RNAct" id="Q96MH2">
    <property type="molecule type" value="protein"/>
</dbReference>
<dbReference type="Bgee" id="ENSG00000168517">
    <property type="expression patterns" value="Expressed in gastrocnemius and 122 other cell types or tissues"/>
</dbReference>
<dbReference type="ExpressionAtlas" id="Q96MH2">
    <property type="expression patterns" value="baseline and differential"/>
</dbReference>
<dbReference type="GO" id="GO:0005737">
    <property type="term" value="C:cytoplasm"/>
    <property type="evidence" value="ECO:0000250"/>
    <property type="project" value="HGNC-UCL"/>
</dbReference>
<dbReference type="GO" id="GO:0005829">
    <property type="term" value="C:cytosol"/>
    <property type="evidence" value="ECO:0000314"/>
    <property type="project" value="HPA"/>
</dbReference>
<dbReference type="GO" id="GO:0016607">
    <property type="term" value="C:nuclear speck"/>
    <property type="evidence" value="ECO:0000314"/>
    <property type="project" value="HPA"/>
</dbReference>
<dbReference type="GO" id="GO:0005654">
    <property type="term" value="C:nucleoplasm"/>
    <property type="evidence" value="ECO:0000314"/>
    <property type="project" value="HPA"/>
</dbReference>
<dbReference type="GO" id="GO:0005634">
    <property type="term" value="C:nucleus"/>
    <property type="evidence" value="ECO:0000250"/>
    <property type="project" value="HGNC-UCL"/>
</dbReference>
<dbReference type="GO" id="GO:0097322">
    <property type="term" value="F:7SK snRNA binding"/>
    <property type="evidence" value="ECO:0000314"/>
    <property type="project" value="UniProtKB"/>
</dbReference>
<dbReference type="GO" id="GO:0004861">
    <property type="term" value="F:cyclin-dependent protein serine/threonine kinase inhibitor activity"/>
    <property type="evidence" value="ECO:0000314"/>
    <property type="project" value="HGNC-UCL"/>
</dbReference>
<dbReference type="GO" id="GO:0042802">
    <property type="term" value="F:identical protein binding"/>
    <property type="evidence" value="ECO:0000353"/>
    <property type="project" value="IntAct"/>
</dbReference>
<dbReference type="GO" id="GO:0017069">
    <property type="term" value="F:snRNA binding"/>
    <property type="evidence" value="ECO:0000314"/>
    <property type="project" value="HGNC-UCL"/>
</dbReference>
<dbReference type="GO" id="GO:0045892">
    <property type="term" value="P:negative regulation of DNA-templated transcription"/>
    <property type="evidence" value="ECO:0000314"/>
    <property type="project" value="HGNC-UCL"/>
</dbReference>
<dbReference type="GO" id="GO:0010972">
    <property type="term" value="P:negative regulation of G2/M transition of mitotic cell cycle"/>
    <property type="evidence" value="ECO:0000314"/>
    <property type="project" value="HGNC-UCL"/>
</dbReference>
<dbReference type="GO" id="GO:0000122">
    <property type="term" value="P:negative regulation of transcription by RNA polymerase II"/>
    <property type="evidence" value="ECO:0000314"/>
    <property type="project" value="HGNC-UCL"/>
</dbReference>
<dbReference type="Gene3D" id="6.10.250.2910">
    <property type="match status" value="1"/>
</dbReference>
<dbReference type="InterPro" id="IPR024872">
    <property type="entry name" value="HEXIM"/>
</dbReference>
<dbReference type="PANTHER" id="PTHR13469">
    <property type="entry name" value="HEXAMETHYLENE BISACETAMIDE INDUCIBLE 1"/>
    <property type="match status" value="1"/>
</dbReference>
<dbReference type="PANTHER" id="PTHR13469:SF3">
    <property type="entry name" value="PROTEIN HEXIM2"/>
    <property type="match status" value="1"/>
</dbReference>
<dbReference type="Pfam" id="PF15313">
    <property type="entry name" value="HEXIM"/>
    <property type="match status" value="1"/>
</dbReference>
<dbReference type="PRINTS" id="PR02094">
    <property type="entry name" value="HEXIMFAMILY"/>
</dbReference>